<dbReference type="EC" id="3.2.2.23" evidence="2"/>
<dbReference type="EC" id="4.2.99.18" evidence="2"/>
<dbReference type="EMBL" id="CP000494">
    <property type="protein sequence ID" value="ABQ32381.1"/>
    <property type="molecule type" value="Genomic_DNA"/>
</dbReference>
<dbReference type="RefSeq" id="WP_011942604.1">
    <property type="nucleotide sequence ID" value="NC_009485.1"/>
</dbReference>
<dbReference type="SMR" id="A5E887"/>
<dbReference type="STRING" id="288000.BBta_0080"/>
<dbReference type="KEGG" id="bbt:BBta_0080"/>
<dbReference type="eggNOG" id="COG0266">
    <property type="taxonomic scope" value="Bacteria"/>
</dbReference>
<dbReference type="HOGENOM" id="CLU_038423_1_1_5"/>
<dbReference type="OrthoDB" id="9800855at2"/>
<dbReference type="Proteomes" id="UP000000246">
    <property type="component" value="Chromosome"/>
</dbReference>
<dbReference type="GO" id="GO:0034039">
    <property type="term" value="F:8-oxo-7,8-dihydroguanine DNA N-glycosylase activity"/>
    <property type="evidence" value="ECO:0007669"/>
    <property type="project" value="TreeGrafter"/>
</dbReference>
<dbReference type="GO" id="GO:0140078">
    <property type="term" value="F:class I DNA-(apurinic or apyrimidinic site) endonuclease activity"/>
    <property type="evidence" value="ECO:0007669"/>
    <property type="project" value="UniProtKB-EC"/>
</dbReference>
<dbReference type="GO" id="GO:0003684">
    <property type="term" value="F:damaged DNA binding"/>
    <property type="evidence" value="ECO:0007669"/>
    <property type="project" value="InterPro"/>
</dbReference>
<dbReference type="GO" id="GO:0008270">
    <property type="term" value="F:zinc ion binding"/>
    <property type="evidence" value="ECO:0007669"/>
    <property type="project" value="UniProtKB-UniRule"/>
</dbReference>
<dbReference type="GO" id="GO:0006284">
    <property type="term" value="P:base-excision repair"/>
    <property type="evidence" value="ECO:0007669"/>
    <property type="project" value="InterPro"/>
</dbReference>
<dbReference type="CDD" id="cd08966">
    <property type="entry name" value="EcFpg-like_N"/>
    <property type="match status" value="1"/>
</dbReference>
<dbReference type="FunFam" id="1.10.8.50:FF:000003">
    <property type="entry name" value="Formamidopyrimidine-DNA glycosylase"/>
    <property type="match status" value="1"/>
</dbReference>
<dbReference type="FunFam" id="3.20.190.10:FF:000001">
    <property type="entry name" value="Formamidopyrimidine-DNA glycosylase"/>
    <property type="match status" value="1"/>
</dbReference>
<dbReference type="Gene3D" id="1.10.8.50">
    <property type="match status" value="1"/>
</dbReference>
<dbReference type="Gene3D" id="3.20.190.10">
    <property type="entry name" value="MutM-like, N-terminal"/>
    <property type="match status" value="1"/>
</dbReference>
<dbReference type="HAMAP" id="MF_00103">
    <property type="entry name" value="Fapy_DNA_glycosyl"/>
    <property type="match status" value="1"/>
</dbReference>
<dbReference type="InterPro" id="IPR015886">
    <property type="entry name" value="DNA_glyclase/AP_lyase_DNA-bd"/>
</dbReference>
<dbReference type="InterPro" id="IPR015887">
    <property type="entry name" value="DNA_glyclase_Znf_dom_DNA_BS"/>
</dbReference>
<dbReference type="InterPro" id="IPR020629">
    <property type="entry name" value="Formamido-pyr_DNA_Glyclase"/>
</dbReference>
<dbReference type="InterPro" id="IPR012319">
    <property type="entry name" value="FPG_cat"/>
</dbReference>
<dbReference type="InterPro" id="IPR035937">
    <property type="entry name" value="MutM-like_N-ter"/>
</dbReference>
<dbReference type="InterPro" id="IPR010979">
    <property type="entry name" value="Ribosomal_uS13-like_H2TH"/>
</dbReference>
<dbReference type="InterPro" id="IPR000214">
    <property type="entry name" value="Znf_DNA_glyclase/AP_lyase"/>
</dbReference>
<dbReference type="InterPro" id="IPR010663">
    <property type="entry name" value="Znf_FPG/IleRS"/>
</dbReference>
<dbReference type="NCBIfam" id="TIGR00577">
    <property type="entry name" value="fpg"/>
    <property type="match status" value="1"/>
</dbReference>
<dbReference type="NCBIfam" id="NF002211">
    <property type="entry name" value="PRK01103.1"/>
    <property type="match status" value="1"/>
</dbReference>
<dbReference type="PANTHER" id="PTHR22993">
    <property type="entry name" value="FORMAMIDOPYRIMIDINE-DNA GLYCOSYLASE"/>
    <property type="match status" value="1"/>
</dbReference>
<dbReference type="PANTHER" id="PTHR22993:SF9">
    <property type="entry name" value="FORMAMIDOPYRIMIDINE-DNA GLYCOSYLASE"/>
    <property type="match status" value="1"/>
</dbReference>
<dbReference type="Pfam" id="PF01149">
    <property type="entry name" value="Fapy_DNA_glyco"/>
    <property type="match status" value="1"/>
</dbReference>
<dbReference type="Pfam" id="PF06831">
    <property type="entry name" value="H2TH"/>
    <property type="match status" value="1"/>
</dbReference>
<dbReference type="Pfam" id="PF06827">
    <property type="entry name" value="zf-FPG_IleRS"/>
    <property type="match status" value="1"/>
</dbReference>
<dbReference type="SMART" id="SM00898">
    <property type="entry name" value="Fapy_DNA_glyco"/>
    <property type="match status" value="1"/>
</dbReference>
<dbReference type="SMART" id="SM01232">
    <property type="entry name" value="H2TH"/>
    <property type="match status" value="1"/>
</dbReference>
<dbReference type="SUPFAM" id="SSF57716">
    <property type="entry name" value="Glucocorticoid receptor-like (DNA-binding domain)"/>
    <property type="match status" value="1"/>
</dbReference>
<dbReference type="SUPFAM" id="SSF81624">
    <property type="entry name" value="N-terminal domain of MutM-like DNA repair proteins"/>
    <property type="match status" value="1"/>
</dbReference>
<dbReference type="SUPFAM" id="SSF46946">
    <property type="entry name" value="S13-like H2TH domain"/>
    <property type="match status" value="1"/>
</dbReference>
<dbReference type="PROSITE" id="PS51068">
    <property type="entry name" value="FPG_CAT"/>
    <property type="match status" value="1"/>
</dbReference>
<dbReference type="PROSITE" id="PS01242">
    <property type="entry name" value="ZF_FPG_1"/>
    <property type="match status" value="1"/>
</dbReference>
<dbReference type="PROSITE" id="PS51066">
    <property type="entry name" value="ZF_FPG_2"/>
    <property type="match status" value="1"/>
</dbReference>
<organism>
    <name type="scientific">Bradyrhizobium sp. (strain BTAi1 / ATCC BAA-1182)</name>
    <dbReference type="NCBI Taxonomy" id="288000"/>
    <lineage>
        <taxon>Bacteria</taxon>
        <taxon>Pseudomonadati</taxon>
        <taxon>Pseudomonadota</taxon>
        <taxon>Alphaproteobacteria</taxon>
        <taxon>Hyphomicrobiales</taxon>
        <taxon>Nitrobacteraceae</taxon>
        <taxon>Bradyrhizobium</taxon>
    </lineage>
</organism>
<feature type="initiator methionine" description="Removed" evidence="1">
    <location>
        <position position="1"/>
    </location>
</feature>
<feature type="chain" id="PRO_1000008678" description="Formamidopyrimidine-DNA glycosylase">
    <location>
        <begin position="2"/>
        <end position="293"/>
    </location>
</feature>
<feature type="zinc finger region" description="FPG-type" evidence="2">
    <location>
        <begin position="257"/>
        <end position="293"/>
    </location>
</feature>
<feature type="active site" description="Schiff-base intermediate with DNA" evidence="2">
    <location>
        <position position="2"/>
    </location>
</feature>
<feature type="active site" description="Proton donor" evidence="2">
    <location>
        <position position="3"/>
    </location>
</feature>
<feature type="active site" description="Proton donor; for beta-elimination activity" evidence="2">
    <location>
        <position position="58"/>
    </location>
</feature>
<feature type="active site" description="Proton donor; for delta-elimination activity" evidence="2">
    <location>
        <position position="283"/>
    </location>
</feature>
<feature type="binding site" evidence="2">
    <location>
        <position position="104"/>
    </location>
    <ligand>
        <name>DNA</name>
        <dbReference type="ChEBI" id="CHEBI:16991"/>
    </ligand>
</feature>
<feature type="binding site" evidence="2">
    <location>
        <position position="123"/>
    </location>
    <ligand>
        <name>DNA</name>
        <dbReference type="ChEBI" id="CHEBI:16991"/>
    </ligand>
</feature>
<feature type="binding site" evidence="2">
    <location>
        <position position="166"/>
    </location>
    <ligand>
        <name>DNA</name>
        <dbReference type="ChEBI" id="CHEBI:16991"/>
    </ligand>
</feature>
<keyword id="KW-0227">DNA damage</keyword>
<keyword id="KW-0234">DNA repair</keyword>
<keyword id="KW-0238">DNA-binding</keyword>
<keyword id="KW-0326">Glycosidase</keyword>
<keyword id="KW-0378">Hydrolase</keyword>
<keyword id="KW-0456">Lyase</keyword>
<keyword id="KW-0479">Metal-binding</keyword>
<keyword id="KW-0511">Multifunctional enzyme</keyword>
<keyword id="KW-1185">Reference proteome</keyword>
<keyword id="KW-0862">Zinc</keyword>
<keyword id="KW-0863">Zinc-finger</keyword>
<accession>A5E887</accession>
<evidence type="ECO:0000250" key="1"/>
<evidence type="ECO:0000255" key="2">
    <source>
        <dbReference type="HAMAP-Rule" id="MF_00103"/>
    </source>
</evidence>
<name>FPG_BRASB</name>
<protein>
    <recommendedName>
        <fullName evidence="2">Formamidopyrimidine-DNA glycosylase</fullName>
        <shortName evidence="2">Fapy-DNA glycosylase</shortName>
        <ecNumber evidence="2">3.2.2.23</ecNumber>
    </recommendedName>
    <alternativeName>
        <fullName evidence="2">DNA-(apurinic or apyrimidinic site) lyase MutM</fullName>
        <shortName evidence="2">AP lyase MutM</shortName>
        <ecNumber evidence="2">4.2.99.18</ecNumber>
    </alternativeName>
</protein>
<proteinExistence type="inferred from homology"/>
<sequence>MPELPEVETVRRGLQPVMEGAKIVAAEARRGDLRFPFQPDFAKRLQGQTVRGLGRRAKYLLADLSSGDVLLMHLGMSGSFRVIKQDDEETPGEFHYPRGKDSVHDHVVFHMSSGADIVFNDPRRFGFMKIIGRGEIEREPHLKDLGPEPLGNEFDAAMLATACAGKKTSLKAALLDQRVVAGLGNIYVCEALFRAHLSPRRLAATLATRKGEPTDHARRLVEAIHAVLNEAIRAGGSSLRDHRQTSGELGYFQHSFQVYDREGEPCRTDGCGGVVKRFVQNGRSTFWCPKCQR</sequence>
<gene>
    <name evidence="2" type="primary">mutM</name>
    <name evidence="2" type="synonym">fpg</name>
    <name type="ordered locus">BBta_0080</name>
</gene>
<reference key="1">
    <citation type="journal article" date="2007" name="Science">
        <title>Legumes symbioses: absence of nod genes in photosynthetic bradyrhizobia.</title>
        <authorList>
            <person name="Giraud E."/>
            <person name="Moulin L."/>
            <person name="Vallenet D."/>
            <person name="Barbe V."/>
            <person name="Cytryn E."/>
            <person name="Avarre J.-C."/>
            <person name="Jaubert M."/>
            <person name="Simon D."/>
            <person name="Cartieaux F."/>
            <person name="Prin Y."/>
            <person name="Bena G."/>
            <person name="Hannibal L."/>
            <person name="Fardoux J."/>
            <person name="Kojadinovic M."/>
            <person name="Vuillet L."/>
            <person name="Lajus A."/>
            <person name="Cruveiller S."/>
            <person name="Rouy Z."/>
            <person name="Mangenot S."/>
            <person name="Segurens B."/>
            <person name="Dossat C."/>
            <person name="Franck W.L."/>
            <person name="Chang W.-S."/>
            <person name="Saunders E."/>
            <person name="Bruce D."/>
            <person name="Richardson P."/>
            <person name="Normand P."/>
            <person name="Dreyfus B."/>
            <person name="Pignol D."/>
            <person name="Stacey G."/>
            <person name="Emerich D."/>
            <person name="Vermeglio A."/>
            <person name="Medigue C."/>
            <person name="Sadowsky M."/>
        </authorList>
    </citation>
    <scope>NUCLEOTIDE SEQUENCE [LARGE SCALE GENOMIC DNA]</scope>
    <source>
        <strain>BTAi1 / ATCC BAA-1182</strain>
    </source>
</reference>
<comment type="function">
    <text evidence="2">Involved in base excision repair of DNA damaged by oxidation or by mutagenic agents. Acts as a DNA glycosylase that recognizes and removes damaged bases. Has a preference for oxidized purines, such as 7,8-dihydro-8-oxoguanine (8-oxoG). Has AP (apurinic/apyrimidinic) lyase activity and introduces nicks in the DNA strand. Cleaves the DNA backbone by beta-delta elimination to generate a single-strand break at the site of the removed base with both 3'- and 5'-phosphates.</text>
</comment>
<comment type="catalytic activity">
    <reaction evidence="2">
        <text>Hydrolysis of DNA containing ring-opened 7-methylguanine residues, releasing 2,6-diamino-4-hydroxy-5-(N-methyl)formamidopyrimidine.</text>
        <dbReference type="EC" id="3.2.2.23"/>
    </reaction>
</comment>
<comment type="catalytic activity">
    <reaction evidence="2">
        <text>2'-deoxyribonucleotide-(2'-deoxyribose 5'-phosphate)-2'-deoxyribonucleotide-DNA = a 3'-end 2'-deoxyribonucleotide-(2,3-dehydro-2,3-deoxyribose 5'-phosphate)-DNA + a 5'-end 5'-phospho-2'-deoxyribonucleoside-DNA + H(+)</text>
        <dbReference type="Rhea" id="RHEA:66592"/>
        <dbReference type="Rhea" id="RHEA-COMP:13180"/>
        <dbReference type="Rhea" id="RHEA-COMP:16897"/>
        <dbReference type="Rhea" id="RHEA-COMP:17067"/>
        <dbReference type="ChEBI" id="CHEBI:15378"/>
        <dbReference type="ChEBI" id="CHEBI:136412"/>
        <dbReference type="ChEBI" id="CHEBI:157695"/>
        <dbReference type="ChEBI" id="CHEBI:167181"/>
        <dbReference type="EC" id="4.2.99.18"/>
    </reaction>
</comment>
<comment type="cofactor">
    <cofactor evidence="2">
        <name>Zn(2+)</name>
        <dbReference type="ChEBI" id="CHEBI:29105"/>
    </cofactor>
    <text evidence="2">Binds 1 zinc ion per subunit.</text>
</comment>
<comment type="subunit">
    <text evidence="2">Monomer.</text>
</comment>
<comment type="similarity">
    <text evidence="2">Belongs to the FPG family.</text>
</comment>